<proteinExistence type="inferred from homology"/>
<name>G6PI_CUPTR</name>
<sequence>MPTDLHAWNALLRHHDTLRDAQMRDWFDREGAQRVAQCSLEAAGLYLDYSKNRITPQTMSLLMQLAAEAGVTRRRDAMFAGEHINTTEDRAVLHVALRAPAGAAFKVDGEAVVPAIHQVLARMRDFSARVRSGAWKGATGERITDVINIGIGGSDLGPRMVCRALSHLADADGHAAPRMHFVSNVDGTDLAETLVRLDPQRTLVIVCSKTFTTLETMANARSARAWFVASGVAEQDLAKHFVAVSTNTEAVREFGIDPANMFEFWDWIGGRFSLWSSVGLSITLAVGFDAFSDLLAGGHAMDEHFRTAPLERNMPVILGMLGVWYRNFWNLPTSCMAPYSTSLELFPAFLQQLEMESNGKSVQLDGQRIRTHTSPVVWGTAGTNGQHAYFQQIHQGSQVVPVDFVAPLVPPRRLPGHHAKLLANCFAQAEALMRGRSADELRASGLKDEVRIAHMVFDGNRPSNTLLMEDLTPNVLGALIALYEHRTFVQGVVWRINSFDQWGVELGKILARPIEAELTGTATGQHDASTAALIARARAVLKAGAAS</sequence>
<evidence type="ECO:0000255" key="1">
    <source>
        <dbReference type="HAMAP-Rule" id="MF_00473"/>
    </source>
</evidence>
<protein>
    <recommendedName>
        <fullName evidence="1">Glucose-6-phosphate isomerase</fullName>
        <shortName evidence="1">GPI</shortName>
        <ecNumber evidence="1">5.3.1.9</ecNumber>
    </recommendedName>
    <alternativeName>
        <fullName evidence="1">Phosphoglucose isomerase</fullName>
        <shortName evidence="1">PGI</shortName>
    </alternativeName>
    <alternativeName>
        <fullName evidence="1">Phosphohexose isomerase</fullName>
        <shortName evidence="1">PHI</shortName>
    </alternativeName>
</protein>
<organism>
    <name type="scientific">Cupriavidus taiwanensis (strain DSM 17343 / BCRC 17206 / CCUG 44338 / CIP 107171 / LMG 19424 / R1)</name>
    <name type="common">Ralstonia taiwanensis (strain LMG 19424)</name>
    <dbReference type="NCBI Taxonomy" id="977880"/>
    <lineage>
        <taxon>Bacteria</taxon>
        <taxon>Pseudomonadati</taxon>
        <taxon>Pseudomonadota</taxon>
        <taxon>Betaproteobacteria</taxon>
        <taxon>Burkholderiales</taxon>
        <taxon>Burkholderiaceae</taxon>
        <taxon>Cupriavidus</taxon>
    </lineage>
</organism>
<keyword id="KW-0963">Cytoplasm</keyword>
<keyword id="KW-0312">Gluconeogenesis</keyword>
<keyword id="KW-0324">Glycolysis</keyword>
<keyword id="KW-0413">Isomerase</keyword>
<accession>B3R508</accession>
<gene>
    <name evidence="1" type="primary">pgi</name>
    <name type="ordered locus">RALTA_A1441</name>
</gene>
<dbReference type="EC" id="5.3.1.9" evidence="1"/>
<dbReference type="EMBL" id="CU633749">
    <property type="protein sequence ID" value="CAQ69390.1"/>
    <property type="molecule type" value="Genomic_DNA"/>
</dbReference>
<dbReference type="RefSeq" id="WP_012352713.1">
    <property type="nucleotide sequence ID" value="NC_010528.1"/>
</dbReference>
<dbReference type="SMR" id="B3R508"/>
<dbReference type="GeneID" id="29763084"/>
<dbReference type="KEGG" id="cti:RALTA_A1441"/>
<dbReference type="eggNOG" id="COG0166">
    <property type="taxonomic scope" value="Bacteria"/>
</dbReference>
<dbReference type="HOGENOM" id="CLU_017947_3_1_4"/>
<dbReference type="BioCyc" id="CTAI977880:RALTA_RS06900-MONOMER"/>
<dbReference type="UniPathway" id="UPA00109">
    <property type="reaction ID" value="UER00181"/>
</dbReference>
<dbReference type="UniPathway" id="UPA00138"/>
<dbReference type="Proteomes" id="UP000001692">
    <property type="component" value="Chromosome 1"/>
</dbReference>
<dbReference type="GO" id="GO:0005829">
    <property type="term" value="C:cytosol"/>
    <property type="evidence" value="ECO:0007669"/>
    <property type="project" value="TreeGrafter"/>
</dbReference>
<dbReference type="GO" id="GO:0097367">
    <property type="term" value="F:carbohydrate derivative binding"/>
    <property type="evidence" value="ECO:0007669"/>
    <property type="project" value="InterPro"/>
</dbReference>
<dbReference type="GO" id="GO:0004347">
    <property type="term" value="F:glucose-6-phosphate isomerase activity"/>
    <property type="evidence" value="ECO:0007669"/>
    <property type="project" value="UniProtKB-UniRule"/>
</dbReference>
<dbReference type="GO" id="GO:0048029">
    <property type="term" value="F:monosaccharide binding"/>
    <property type="evidence" value="ECO:0007669"/>
    <property type="project" value="TreeGrafter"/>
</dbReference>
<dbReference type="GO" id="GO:0006094">
    <property type="term" value="P:gluconeogenesis"/>
    <property type="evidence" value="ECO:0007669"/>
    <property type="project" value="UniProtKB-UniRule"/>
</dbReference>
<dbReference type="GO" id="GO:0051156">
    <property type="term" value="P:glucose 6-phosphate metabolic process"/>
    <property type="evidence" value="ECO:0007669"/>
    <property type="project" value="TreeGrafter"/>
</dbReference>
<dbReference type="GO" id="GO:0006096">
    <property type="term" value="P:glycolytic process"/>
    <property type="evidence" value="ECO:0007669"/>
    <property type="project" value="UniProtKB-UniRule"/>
</dbReference>
<dbReference type="CDD" id="cd05015">
    <property type="entry name" value="SIS_PGI_1"/>
    <property type="match status" value="1"/>
</dbReference>
<dbReference type="CDD" id="cd05016">
    <property type="entry name" value="SIS_PGI_2"/>
    <property type="match status" value="1"/>
</dbReference>
<dbReference type="FunFam" id="3.40.50.10490:FF:000018">
    <property type="entry name" value="Glucose-6-phosphate isomerase"/>
    <property type="match status" value="1"/>
</dbReference>
<dbReference type="Gene3D" id="1.10.1390.10">
    <property type="match status" value="1"/>
</dbReference>
<dbReference type="Gene3D" id="3.40.50.10490">
    <property type="entry name" value="Glucose-6-phosphate isomerase like protein, domain 1"/>
    <property type="match status" value="2"/>
</dbReference>
<dbReference type="HAMAP" id="MF_00473">
    <property type="entry name" value="G6P_isomerase"/>
    <property type="match status" value="1"/>
</dbReference>
<dbReference type="InterPro" id="IPR001672">
    <property type="entry name" value="G6P_Isomerase"/>
</dbReference>
<dbReference type="InterPro" id="IPR023096">
    <property type="entry name" value="G6P_Isomerase_C"/>
</dbReference>
<dbReference type="InterPro" id="IPR018189">
    <property type="entry name" value="Phosphoglucose_isomerase_CS"/>
</dbReference>
<dbReference type="InterPro" id="IPR046348">
    <property type="entry name" value="SIS_dom_sf"/>
</dbReference>
<dbReference type="InterPro" id="IPR035476">
    <property type="entry name" value="SIS_PGI_1"/>
</dbReference>
<dbReference type="InterPro" id="IPR035482">
    <property type="entry name" value="SIS_PGI_2"/>
</dbReference>
<dbReference type="NCBIfam" id="NF001211">
    <property type="entry name" value="PRK00179.1"/>
    <property type="match status" value="1"/>
</dbReference>
<dbReference type="PANTHER" id="PTHR11469">
    <property type="entry name" value="GLUCOSE-6-PHOSPHATE ISOMERASE"/>
    <property type="match status" value="1"/>
</dbReference>
<dbReference type="PANTHER" id="PTHR11469:SF1">
    <property type="entry name" value="GLUCOSE-6-PHOSPHATE ISOMERASE"/>
    <property type="match status" value="1"/>
</dbReference>
<dbReference type="Pfam" id="PF00342">
    <property type="entry name" value="PGI"/>
    <property type="match status" value="1"/>
</dbReference>
<dbReference type="PRINTS" id="PR00662">
    <property type="entry name" value="G6PISOMERASE"/>
</dbReference>
<dbReference type="SUPFAM" id="SSF53697">
    <property type="entry name" value="SIS domain"/>
    <property type="match status" value="1"/>
</dbReference>
<dbReference type="PROSITE" id="PS00765">
    <property type="entry name" value="P_GLUCOSE_ISOMERASE_1"/>
    <property type="match status" value="1"/>
</dbReference>
<dbReference type="PROSITE" id="PS00174">
    <property type="entry name" value="P_GLUCOSE_ISOMERASE_2"/>
    <property type="match status" value="1"/>
</dbReference>
<dbReference type="PROSITE" id="PS51463">
    <property type="entry name" value="P_GLUCOSE_ISOMERASE_3"/>
    <property type="match status" value="1"/>
</dbReference>
<reference key="1">
    <citation type="journal article" date="2008" name="Genome Res.">
        <title>Genome sequence of the beta-rhizobium Cupriavidus taiwanensis and comparative genomics of rhizobia.</title>
        <authorList>
            <person name="Amadou C."/>
            <person name="Pascal G."/>
            <person name="Mangenot S."/>
            <person name="Glew M."/>
            <person name="Bontemps C."/>
            <person name="Capela D."/>
            <person name="Carrere S."/>
            <person name="Cruveiller S."/>
            <person name="Dossat C."/>
            <person name="Lajus A."/>
            <person name="Marchetti M."/>
            <person name="Poinsot V."/>
            <person name="Rouy Z."/>
            <person name="Servin B."/>
            <person name="Saad M."/>
            <person name="Schenowitz C."/>
            <person name="Barbe V."/>
            <person name="Batut J."/>
            <person name="Medigue C."/>
            <person name="Masson-Boivin C."/>
        </authorList>
    </citation>
    <scope>NUCLEOTIDE SEQUENCE [LARGE SCALE GENOMIC DNA]</scope>
    <source>
        <strain>DSM 17343 / BCRC 17206 / CCUG 44338 / CIP 107171 / LMG 19424 / R1</strain>
    </source>
</reference>
<comment type="function">
    <text evidence="1">Catalyzes the reversible isomerization of glucose-6-phosphate to fructose-6-phosphate.</text>
</comment>
<comment type="catalytic activity">
    <reaction evidence="1">
        <text>alpha-D-glucose 6-phosphate = beta-D-fructose 6-phosphate</text>
        <dbReference type="Rhea" id="RHEA:11816"/>
        <dbReference type="ChEBI" id="CHEBI:57634"/>
        <dbReference type="ChEBI" id="CHEBI:58225"/>
        <dbReference type="EC" id="5.3.1.9"/>
    </reaction>
</comment>
<comment type="pathway">
    <text evidence="1">Carbohydrate biosynthesis; gluconeogenesis.</text>
</comment>
<comment type="pathway">
    <text evidence="1">Carbohydrate degradation; glycolysis; D-glyceraldehyde 3-phosphate and glycerone phosphate from D-glucose: step 2/4.</text>
</comment>
<comment type="subcellular location">
    <subcellularLocation>
        <location evidence="1">Cytoplasm</location>
    </subcellularLocation>
</comment>
<comment type="similarity">
    <text evidence="1">Belongs to the GPI family.</text>
</comment>
<feature type="chain" id="PRO_1000125713" description="Glucose-6-phosphate isomerase">
    <location>
        <begin position="1"/>
        <end position="547"/>
    </location>
</feature>
<feature type="active site" description="Proton donor" evidence="1">
    <location>
        <position position="356"/>
    </location>
</feature>
<feature type="active site" evidence="1">
    <location>
        <position position="387"/>
    </location>
</feature>
<feature type="active site" evidence="1">
    <location>
        <position position="508"/>
    </location>
</feature>